<reference key="1">
    <citation type="journal article" date="2001" name="Proc. Natl. Acad. Sci. U.S.A.">
        <title>Genome sequence of an industrial microorganism Streptomyces avermitilis: deducing the ability of producing secondary metabolites.</title>
        <authorList>
            <person name="Omura S."/>
            <person name="Ikeda H."/>
            <person name="Ishikawa J."/>
            <person name="Hanamoto A."/>
            <person name="Takahashi C."/>
            <person name="Shinose M."/>
            <person name="Takahashi Y."/>
            <person name="Horikawa H."/>
            <person name="Nakazawa H."/>
            <person name="Osonoe T."/>
            <person name="Kikuchi H."/>
            <person name="Shiba T."/>
            <person name="Sakaki Y."/>
            <person name="Hattori M."/>
        </authorList>
    </citation>
    <scope>NUCLEOTIDE SEQUENCE [LARGE SCALE GENOMIC DNA]</scope>
    <source>
        <strain>ATCC 31267 / DSM 46492 / JCM 5070 / NBRC 14893 / NCIMB 12804 / NRRL 8165 / MA-4680</strain>
    </source>
</reference>
<reference key="2">
    <citation type="journal article" date="2003" name="Nat. Biotechnol.">
        <title>Complete genome sequence and comparative analysis of the industrial microorganism Streptomyces avermitilis.</title>
        <authorList>
            <person name="Ikeda H."/>
            <person name="Ishikawa J."/>
            <person name="Hanamoto A."/>
            <person name="Shinose M."/>
            <person name="Kikuchi H."/>
            <person name="Shiba T."/>
            <person name="Sakaki Y."/>
            <person name="Hattori M."/>
            <person name="Omura S."/>
        </authorList>
    </citation>
    <scope>NUCLEOTIDE SEQUENCE [LARGE SCALE GENOMIC DNA]</scope>
    <source>
        <strain>ATCC 31267 / DSM 46492 / JCM 5070 / NBRC 14893 / NCIMB 12804 / NRRL 8165 / MA-4680</strain>
    </source>
</reference>
<keyword id="KW-1185">Reference proteome</keyword>
<keyword id="KW-0687">Ribonucleoprotein</keyword>
<keyword id="KW-0689">Ribosomal protein</keyword>
<keyword id="KW-0694">RNA-binding</keyword>
<keyword id="KW-0699">rRNA-binding</keyword>
<comment type="function">
    <text evidence="1">Binds the lower part of the 30S subunit head. Binds mRNA in the 70S ribosome, positioning it for translation.</text>
</comment>
<comment type="subunit">
    <text evidence="1">Part of the 30S ribosomal subunit. Forms a tight complex with proteins S10 and S14.</text>
</comment>
<comment type="similarity">
    <text evidence="1">Belongs to the universal ribosomal protein uS3 family.</text>
</comment>
<dbReference type="EMBL" id="BA000030">
    <property type="protein sequence ID" value="BAC72644.1"/>
    <property type="molecule type" value="Genomic_DNA"/>
</dbReference>
<dbReference type="RefSeq" id="WP_010986347.1">
    <property type="nucleotide sequence ID" value="NZ_JZJK01000077.1"/>
</dbReference>
<dbReference type="SMR" id="Q82DN9"/>
<dbReference type="GeneID" id="91545545"/>
<dbReference type="KEGG" id="sma:SAVERM_4932"/>
<dbReference type="eggNOG" id="COG0092">
    <property type="taxonomic scope" value="Bacteria"/>
</dbReference>
<dbReference type="HOGENOM" id="CLU_058591_0_2_11"/>
<dbReference type="OrthoDB" id="9806396at2"/>
<dbReference type="Proteomes" id="UP000000428">
    <property type="component" value="Chromosome"/>
</dbReference>
<dbReference type="GO" id="GO:0022627">
    <property type="term" value="C:cytosolic small ribosomal subunit"/>
    <property type="evidence" value="ECO:0007669"/>
    <property type="project" value="TreeGrafter"/>
</dbReference>
<dbReference type="GO" id="GO:0003729">
    <property type="term" value="F:mRNA binding"/>
    <property type="evidence" value="ECO:0007669"/>
    <property type="project" value="UniProtKB-UniRule"/>
</dbReference>
<dbReference type="GO" id="GO:0019843">
    <property type="term" value="F:rRNA binding"/>
    <property type="evidence" value="ECO:0007669"/>
    <property type="project" value="UniProtKB-UniRule"/>
</dbReference>
<dbReference type="GO" id="GO:0003735">
    <property type="term" value="F:structural constituent of ribosome"/>
    <property type="evidence" value="ECO:0007669"/>
    <property type="project" value="InterPro"/>
</dbReference>
<dbReference type="GO" id="GO:0006412">
    <property type="term" value="P:translation"/>
    <property type="evidence" value="ECO:0007669"/>
    <property type="project" value="UniProtKB-UniRule"/>
</dbReference>
<dbReference type="CDD" id="cd02412">
    <property type="entry name" value="KH-II_30S_S3"/>
    <property type="match status" value="1"/>
</dbReference>
<dbReference type="FunFam" id="3.30.1140.32:FF:000002">
    <property type="entry name" value="30S ribosomal protein S3"/>
    <property type="match status" value="1"/>
</dbReference>
<dbReference type="FunFam" id="3.30.300.20:FF:000001">
    <property type="entry name" value="30S ribosomal protein S3"/>
    <property type="match status" value="1"/>
</dbReference>
<dbReference type="Gene3D" id="3.30.300.20">
    <property type="match status" value="1"/>
</dbReference>
<dbReference type="Gene3D" id="3.30.1140.32">
    <property type="entry name" value="Ribosomal protein S3, C-terminal domain"/>
    <property type="match status" value="1"/>
</dbReference>
<dbReference type="HAMAP" id="MF_01309_B">
    <property type="entry name" value="Ribosomal_uS3_B"/>
    <property type="match status" value="1"/>
</dbReference>
<dbReference type="InterPro" id="IPR004087">
    <property type="entry name" value="KH_dom"/>
</dbReference>
<dbReference type="InterPro" id="IPR015946">
    <property type="entry name" value="KH_dom-like_a/b"/>
</dbReference>
<dbReference type="InterPro" id="IPR004044">
    <property type="entry name" value="KH_dom_type_2"/>
</dbReference>
<dbReference type="InterPro" id="IPR009019">
    <property type="entry name" value="KH_sf_prok-type"/>
</dbReference>
<dbReference type="InterPro" id="IPR036419">
    <property type="entry name" value="Ribosomal_S3_C_sf"/>
</dbReference>
<dbReference type="InterPro" id="IPR005704">
    <property type="entry name" value="Ribosomal_uS3_bac-typ"/>
</dbReference>
<dbReference type="InterPro" id="IPR001351">
    <property type="entry name" value="Ribosomal_uS3_C"/>
</dbReference>
<dbReference type="InterPro" id="IPR018280">
    <property type="entry name" value="Ribosomal_uS3_CS"/>
</dbReference>
<dbReference type="NCBIfam" id="TIGR01009">
    <property type="entry name" value="rpsC_bact"/>
    <property type="match status" value="1"/>
</dbReference>
<dbReference type="PANTHER" id="PTHR11760">
    <property type="entry name" value="30S/40S RIBOSOMAL PROTEIN S3"/>
    <property type="match status" value="1"/>
</dbReference>
<dbReference type="PANTHER" id="PTHR11760:SF19">
    <property type="entry name" value="SMALL RIBOSOMAL SUBUNIT PROTEIN US3C"/>
    <property type="match status" value="1"/>
</dbReference>
<dbReference type="Pfam" id="PF07650">
    <property type="entry name" value="KH_2"/>
    <property type="match status" value="1"/>
</dbReference>
<dbReference type="Pfam" id="PF00189">
    <property type="entry name" value="Ribosomal_S3_C"/>
    <property type="match status" value="1"/>
</dbReference>
<dbReference type="SMART" id="SM00322">
    <property type="entry name" value="KH"/>
    <property type="match status" value="1"/>
</dbReference>
<dbReference type="SUPFAM" id="SSF54814">
    <property type="entry name" value="Prokaryotic type KH domain (KH-domain type II)"/>
    <property type="match status" value="1"/>
</dbReference>
<dbReference type="SUPFAM" id="SSF54821">
    <property type="entry name" value="Ribosomal protein S3 C-terminal domain"/>
    <property type="match status" value="1"/>
</dbReference>
<dbReference type="PROSITE" id="PS50823">
    <property type="entry name" value="KH_TYPE_2"/>
    <property type="match status" value="1"/>
</dbReference>
<dbReference type="PROSITE" id="PS00548">
    <property type="entry name" value="RIBOSOMAL_S3"/>
    <property type="match status" value="1"/>
</dbReference>
<sequence>MGQKVNPHGFRLGITTDFKSRWYADKLYKDYVKEDVAIRRMMTSGMERAGISKVEIERTRDRVRVDIHTARPGIVIGRRGAEADRIRGDLEKLTGKQVQLNILEVKNPETDAQLVAQAVAEQLSSRVSFRRAMRKSMQSAMKAGAKGIKIQCGGRLGGAEMSRSEFYREGRVPLHTLRANVDYGFFEAKTTFGRIGVKVWIYKGDVKNIAEVRAENAAARAGNRPARGGADRPARGGRGGERGGRGRKPQQAPAAEAPKAEAPAAAPAESTGTEA</sequence>
<accession>Q82DN9</accession>
<name>RS3_STRAW</name>
<evidence type="ECO:0000255" key="1">
    <source>
        <dbReference type="HAMAP-Rule" id="MF_01309"/>
    </source>
</evidence>
<evidence type="ECO:0000256" key="2">
    <source>
        <dbReference type="SAM" id="MobiDB-lite"/>
    </source>
</evidence>
<evidence type="ECO:0000305" key="3"/>
<feature type="chain" id="PRO_0000130205" description="Small ribosomal subunit protein uS3">
    <location>
        <begin position="1"/>
        <end position="275"/>
    </location>
</feature>
<feature type="domain" description="KH type-2" evidence="1">
    <location>
        <begin position="38"/>
        <end position="106"/>
    </location>
</feature>
<feature type="region of interest" description="Disordered" evidence="2">
    <location>
        <begin position="216"/>
        <end position="275"/>
    </location>
</feature>
<feature type="compositionally biased region" description="Low complexity" evidence="2">
    <location>
        <begin position="216"/>
        <end position="228"/>
    </location>
</feature>
<feature type="compositionally biased region" description="Basic and acidic residues" evidence="2">
    <location>
        <begin position="229"/>
        <end position="244"/>
    </location>
</feature>
<feature type="compositionally biased region" description="Low complexity" evidence="2">
    <location>
        <begin position="249"/>
        <end position="268"/>
    </location>
</feature>
<protein>
    <recommendedName>
        <fullName evidence="1">Small ribosomal subunit protein uS3</fullName>
    </recommendedName>
    <alternativeName>
        <fullName evidence="3">30S ribosomal protein S3</fullName>
    </alternativeName>
</protein>
<proteinExistence type="inferred from homology"/>
<gene>
    <name evidence="1" type="primary">rpsC</name>
    <name type="ordered locus">SAV_4932</name>
</gene>
<organism>
    <name type="scientific">Streptomyces avermitilis (strain ATCC 31267 / DSM 46492 / JCM 5070 / NBRC 14893 / NCIMB 12804 / NRRL 8165 / MA-4680)</name>
    <dbReference type="NCBI Taxonomy" id="227882"/>
    <lineage>
        <taxon>Bacteria</taxon>
        <taxon>Bacillati</taxon>
        <taxon>Actinomycetota</taxon>
        <taxon>Actinomycetes</taxon>
        <taxon>Kitasatosporales</taxon>
        <taxon>Streptomycetaceae</taxon>
        <taxon>Streptomyces</taxon>
    </lineage>
</organism>